<reference key="1">
    <citation type="journal article" date="2009" name="PLoS Genet.">
        <title>Organised genome dynamics in the Escherichia coli species results in highly diverse adaptive paths.</title>
        <authorList>
            <person name="Touchon M."/>
            <person name="Hoede C."/>
            <person name="Tenaillon O."/>
            <person name="Barbe V."/>
            <person name="Baeriswyl S."/>
            <person name="Bidet P."/>
            <person name="Bingen E."/>
            <person name="Bonacorsi S."/>
            <person name="Bouchier C."/>
            <person name="Bouvet O."/>
            <person name="Calteau A."/>
            <person name="Chiapello H."/>
            <person name="Clermont O."/>
            <person name="Cruveiller S."/>
            <person name="Danchin A."/>
            <person name="Diard M."/>
            <person name="Dossat C."/>
            <person name="Karoui M.E."/>
            <person name="Frapy E."/>
            <person name="Garry L."/>
            <person name="Ghigo J.M."/>
            <person name="Gilles A.M."/>
            <person name="Johnson J."/>
            <person name="Le Bouguenec C."/>
            <person name="Lescat M."/>
            <person name="Mangenot S."/>
            <person name="Martinez-Jehanne V."/>
            <person name="Matic I."/>
            <person name="Nassif X."/>
            <person name="Oztas S."/>
            <person name="Petit M.A."/>
            <person name="Pichon C."/>
            <person name="Rouy Z."/>
            <person name="Ruf C.S."/>
            <person name="Schneider D."/>
            <person name="Tourret J."/>
            <person name="Vacherie B."/>
            <person name="Vallenet D."/>
            <person name="Medigue C."/>
            <person name="Rocha E.P.C."/>
            <person name="Denamur E."/>
        </authorList>
    </citation>
    <scope>NUCLEOTIDE SEQUENCE [LARGE SCALE GENOMIC DNA]</scope>
    <source>
        <strain>IAI1</strain>
    </source>
</reference>
<evidence type="ECO:0000255" key="1">
    <source>
        <dbReference type="HAMAP-Rule" id="MF_01445"/>
    </source>
</evidence>
<sequence>MRVLGIETSCDETGIAIYDDEKGLLANQLYSQVKLHADYGGVVPELASRDHVRKTVPLIQAALKESGLTAKDIDAVAYTAGPGLVGALLVGATVGRSLAFAWNVPAIPVHHMEGHLLAPMLEDNPPEFPFVALLVSGGHTQLISVTGIGQYELLGESIDDAAGEAFDKTAKLLGLDYPGGPLLSKMAAQGTAGRFVFPRPMTDRPGLDFSFSGLKTFAANTIRDNGTDDQTRADIARAFEDAVVDTLMIKCKRALDQTGFKRLVMAGGVSANRTLRAKLAEMMKKRRGEVFYARPEFCTDNGAMIAYAGMVRFKAGATADLGVSVRPRWPLAELPAA</sequence>
<comment type="function">
    <text evidence="1">Required for the formation of a threonylcarbamoyl group on adenosine at position 37 (t(6)A37) in tRNAs that read codons beginning with adenine. Is involved in the transfer of the threonylcarbamoyl moiety of threonylcarbamoyl-AMP (TC-AMP) to the N6 group of A37, together with TsaE and TsaB. TsaD likely plays a direct catalytic role in this reaction.</text>
</comment>
<comment type="catalytic activity">
    <reaction evidence="1">
        <text>L-threonylcarbamoyladenylate + adenosine(37) in tRNA = N(6)-L-threonylcarbamoyladenosine(37) in tRNA + AMP + H(+)</text>
        <dbReference type="Rhea" id="RHEA:37059"/>
        <dbReference type="Rhea" id="RHEA-COMP:10162"/>
        <dbReference type="Rhea" id="RHEA-COMP:10163"/>
        <dbReference type="ChEBI" id="CHEBI:15378"/>
        <dbReference type="ChEBI" id="CHEBI:73682"/>
        <dbReference type="ChEBI" id="CHEBI:74411"/>
        <dbReference type="ChEBI" id="CHEBI:74418"/>
        <dbReference type="ChEBI" id="CHEBI:456215"/>
        <dbReference type="EC" id="2.3.1.234"/>
    </reaction>
</comment>
<comment type="cofactor">
    <cofactor evidence="1">
        <name>Fe(2+)</name>
        <dbReference type="ChEBI" id="CHEBI:29033"/>
    </cofactor>
    <text evidence="1">Binds 1 Fe(2+) ion per subunit.</text>
</comment>
<comment type="subcellular location">
    <subcellularLocation>
        <location evidence="1">Cytoplasm</location>
    </subcellularLocation>
</comment>
<comment type="similarity">
    <text evidence="1">Belongs to the KAE1 / TsaD family.</text>
</comment>
<proteinExistence type="inferred from homology"/>
<organism>
    <name type="scientific">Escherichia coli O8 (strain IAI1)</name>
    <dbReference type="NCBI Taxonomy" id="585034"/>
    <lineage>
        <taxon>Bacteria</taxon>
        <taxon>Pseudomonadati</taxon>
        <taxon>Pseudomonadota</taxon>
        <taxon>Gammaproteobacteria</taxon>
        <taxon>Enterobacterales</taxon>
        <taxon>Enterobacteriaceae</taxon>
        <taxon>Escherichia</taxon>
    </lineage>
</organism>
<name>TSAD_ECO8A</name>
<accession>B7LZL4</accession>
<dbReference type="EC" id="2.3.1.234" evidence="1"/>
<dbReference type="EMBL" id="CU928160">
    <property type="protein sequence ID" value="CAR00026.1"/>
    <property type="molecule type" value="Genomic_DNA"/>
</dbReference>
<dbReference type="RefSeq" id="WP_001264365.1">
    <property type="nucleotide sequence ID" value="NC_011741.1"/>
</dbReference>
<dbReference type="SMR" id="B7LZL4"/>
<dbReference type="GeneID" id="93778929"/>
<dbReference type="KEGG" id="ecr:ECIAI1_3212"/>
<dbReference type="HOGENOM" id="CLU_023208_0_2_6"/>
<dbReference type="GO" id="GO:0005737">
    <property type="term" value="C:cytoplasm"/>
    <property type="evidence" value="ECO:0007669"/>
    <property type="project" value="UniProtKB-SubCell"/>
</dbReference>
<dbReference type="GO" id="GO:0005506">
    <property type="term" value="F:iron ion binding"/>
    <property type="evidence" value="ECO:0007669"/>
    <property type="project" value="UniProtKB-UniRule"/>
</dbReference>
<dbReference type="GO" id="GO:0061711">
    <property type="term" value="F:N(6)-L-threonylcarbamoyladenine synthase activity"/>
    <property type="evidence" value="ECO:0007669"/>
    <property type="project" value="UniProtKB-EC"/>
</dbReference>
<dbReference type="GO" id="GO:0002949">
    <property type="term" value="P:tRNA threonylcarbamoyladenosine modification"/>
    <property type="evidence" value="ECO:0007669"/>
    <property type="project" value="UniProtKB-UniRule"/>
</dbReference>
<dbReference type="CDD" id="cd24097">
    <property type="entry name" value="ASKHA_NBD_TsaD-like"/>
    <property type="match status" value="1"/>
</dbReference>
<dbReference type="FunFam" id="3.30.420.40:FF:000031">
    <property type="entry name" value="tRNA N6-adenosine threonylcarbamoyltransferase"/>
    <property type="match status" value="1"/>
</dbReference>
<dbReference type="Gene3D" id="3.30.420.40">
    <property type="match status" value="2"/>
</dbReference>
<dbReference type="HAMAP" id="MF_01445">
    <property type="entry name" value="TsaD"/>
    <property type="match status" value="1"/>
</dbReference>
<dbReference type="InterPro" id="IPR043129">
    <property type="entry name" value="ATPase_NBD"/>
</dbReference>
<dbReference type="InterPro" id="IPR000905">
    <property type="entry name" value="Gcp-like_dom"/>
</dbReference>
<dbReference type="InterPro" id="IPR017861">
    <property type="entry name" value="KAE1/TsaD"/>
</dbReference>
<dbReference type="InterPro" id="IPR017860">
    <property type="entry name" value="Peptidase_M22_CS"/>
</dbReference>
<dbReference type="InterPro" id="IPR022450">
    <property type="entry name" value="TsaD"/>
</dbReference>
<dbReference type="NCBIfam" id="TIGR00329">
    <property type="entry name" value="gcp_kae1"/>
    <property type="match status" value="1"/>
</dbReference>
<dbReference type="NCBIfam" id="TIGR03723">
    <property type="entry name" value="T6A_TsaD_YgjD"/>
    <property type="match status" value="1"/>
</dbReference>
<dbReference type="PANTHER" id="PTHR11735">
    <property type="entry name" value="TRNA N6-ADENOSINE THREONYLCARBAMOYLTRANSFERASE"/>
    <property type="match status" value="1"/>
</dbReference>
<dbReference type="PANTHER" id="PTHR11735:SF6">
    <property type="entry name" value="TRNA N6-ADENOSINE THREONYLCARBAMOYLTRANSFERASE, MITOCHONDRIAL"/>
    <property type="match status" value="1"/>
</dbReference>
<dbReference type="Pfam" id="PF00814">
    <property type="entry name" value="TsaD"/>
    <property type="match status" value="1"/>
</dbReference>
<dbReference type="PRINTS" id="PR00789">
    <property type="entry name" value="OSIALOPTASE"/>
</dbReference>
<dbReference type="SUPFAM" id="SSF53067">
    <property type="entry name" value="Actin-like ATPase domain"/>
    <property type="match status" value="1"/>
</dbReference>
<dbReference type="PROSITE" id="PS01016">
    <property type="entry name" value="GLYCOPROTEASE"/>
    <property type="match status" value="1"/>
</dbReference>
<protein>
    <recommendedName>
        <fullName evidence="1">tRNA N6-adenosine threonylcarbamoyltransferase</fullName>
        <ecNumber evidence="1">2.3.1.234</ecNumber>
    </recommendedName>
    <alternativeName>
        <fullName evidence="1">N6-L-threonylcarbamoyladenine synthase</fullName>
        <shortName evidence="1">t(6)A synthase</shortName>
    </alternativeName>
    <alternativeName>
        <fullName evidence="1">t(6)A37 threonylcarbamoyladenosine biosynthesis protein TsaD</fullName>
    </alternativeName>
    <alternativeName>
        <fullName evidence="1">tRNA threonylcarbamoyladenosine biosynthesis protein TsaD</fullName>
    </alternativeName>
</protein>
<keyword id="KW-0012">Acyltransferase</keyword>
<keyword id="KW-0963">Cytoplasm</keyword>
<keyword id="KW-0408">Iron</keyword>
<keyword id="KW-0479">Metal-binding</keyword>
<keyword id="KW-0808">Transferase</keyword>
<keyword id="KW-0819">tRNA processing</keyword>
<feature type="chain" id="PRO_1000145977" description="tRNA N6-adenosine threonylcarbamoyltransferase">
    <location>
        <begin position="1"/>
        <end position="337"/>
    </location>
</feature>
<feature type="binding site" evidence="1">
    <location>
        <position position="111"/>
    </location>
    <ligand>
        <name>Fe cation</name>
        <dbReference type="ChEBI" id="CHEBI:24875"/>
    </ligand>
</feature>
<feature type="binding site" evidence="1">
    <location>
        <position position="115"/>
    </location>
    <ligand>
        <name>Fe cation</name>
        <dbReference type="ChEBI" id="CHEBI:24875"/>
    </ligand>
</feature>
<feature type="binding site" evidence="1">
    <location>
        <begin position="134"/>
        <end position="138"/>
    </location>
    <ligand>
        <name>substrate</name>
    </ligand>
</feature>
<feature type="binding site" evidence="1">
    <location>
        <position position="167"/>
    </location>
    <ligand>
        <name>substrate</name>
    </ligand>
</feature>
<feature type="binding site" evidence="1">
    <location>
        <position position="180"/>
    </location>
    <ligand>
        <name>substrate</name>
    </ligand>
</feature>
<feature type="binding site" evidence="1">
    <location>
        <position position="272"/>
    </location>
    <ligand>
        <name>substrate</name>
    </ligand>
</feature>
<feature type="binding site" evidence="1">
    <location>
        <position position="300"/>
    </location>
    <ligand>
        <name>Fe cation</name>
        <dbReference type="ChEBI" id="CHEBI:24875"/>
    </ligand>
</feature>
<gene>
    <name evidence="1" type="primary">tsaD</name>
    <name type="synonym">gcp</name>
    <name type="ordered locus">ECIAI1_3212</name>
</gene>